<protein>
    <recommendedName>
        <fullName>Olfactory receptor 51I1</fullName>
    </recommendedName>
    <alternativeName>
        <fullName>Odorant receptor HOR5'beta11</fullName>
    </alternativeName>
    <alternativeName>
        <fullName>Olfactory receptor OR11-39</fullName>
    </alternativeName>
</protein>
<dbReference type="EMBL" id="AF137396">
    <property type="protein sequence ID" value="AAG41679.1"/>
    <property type="molecule type" value="Genomic_DNA"/>
</dbReference>
<dbReference type="EMBL" id="CH471064">
    <property type="protein sequence ID" value="EAW68794.1"/>
    <property type="molecule type" value="Genomic_DNA"/>
</dbReference>
<dbReference type="EMBL" id="BC151148">
    <property type="protein sequence ID" value="AAI51149.1"/>
    <property type="molecule type" value="mRNA"/>
</dbReference>
<dbReference type="EMBL" id="BK004429">
    <property type="protein sequence ID" value="DAA04827.1"/>
    <property type="molecule type" value="Genomic_DNA"/>
</dbReference>
<dbReference type="CCDS" id="CCDS31382.1"/>
<dbReference type="RefSeq" id="NP_001005288.1">
    <property type="nucleotide sequence ID" value="NM_001005288.3"/>
</dbReference>
<dbReference type="SMR" id="Q9H343"/>
<dbReference type="FunCoup" id="Q9H343">
    <property type="interactions" value="476"/>
</dbReference>
<dbReference type="STRING" id="9606.ENSP00000369559"/>
<dbReference type="BioMuta" id="OR51I1"/>
<dbReference type="DMDM" id="14423835"/>
<dbReference type="PaxDb" id="9606-ENSP00000369559"/>
<dbReference type="Antibodypedia" id="55456">
    <property type="antibodies" value="86 antibodies from 20 providers"/>
</dbReference>
<dbReference type="DNASU" id="390063"/>
<dbReference type="Ensembl" id="ENST00000380211.1">
    <property type="protein sequence ID" value="ENSP00000369559.1"/>
    <property type="gene ID" value="ENSG00000167359.8"/>
</dbReference>
<dbReference type="GeneID" id="390063"/>
<dbReference type="KEGG" id="hsa:390063"/>
<dbReference type="MANE-Select" id="ENST00000380211.1">
    <property type="protein sequence ID" value="ENSP00000369559.1"/>
    <property type="RefSeq nucleotide sequence ID" value="NM_001005288.3"/>
    <property type="RefSeq protein sequence ID" value="NP_001005288.1"/>
</dbReference>
<dbReference type="UCSC" id="uc010qze.3">
    <property type="organism name" value="human"/>
</dbReference>
<dbReference type="AGR" id="HGNC:15200"/>
<dbReference type="CTD" id="390063"/>
<dbReference type="GeneCards" id="OR51I1"/>
<dbReference type="HGNC" id="HGNC:15200">
    <property type="gene designation" value="OR51I1"/>
</dbReference>
<dbReference type="HPA" id="ENSG00000167359">
    <property type="expression patterns" value="Not detected"/>
</dbReference>
<dbReference type="neXtProt" id="NX_Q9H343"/>
<dbReference type="PharmGKB" id="PA32380"/>
<dbReference type="VEuPathDB" id="HostDB:ENSG00000167359"/>
<dbReference type="eggNOG" id="ENOG502RF9W">
    <property type="taxonomic scope" value="Eukaryota"/>
</dbReference>
<dbReference type="GeneTree" id="ENSGT01130000278321"/>
<dbReference type="HOGENOM" id="CLU_012526_0_0_1"/>
<dbReference type="InParanoid" id="Q9H343"/>
<dbReference type="OMA" id="FCFNYHH"/>
<dbReference type="OrthoDB" id="9444602at2759"/>
<dbReference type="PAN-GO" id="Q9H343">
    <property type="GO annotations" value="2 GO annotations based on evolutionary models"/>
</dbReference>
<dbReference type="PhylomeDB" id="Q9H343"/>
<dbReference type="TreeFam" id="TF342735"/>
<dbReference type="PathwayCommons" id="Q9H343"/>
<dbReference type="Reactome" id="R-HSA-9752946">
    <property type="pathway name" value="Expression and translocation of olfactory receptors"/>
</dbReference>
<dbReference type="BioGRID-ORCS" id="390063">
    <property type="hits" value="10 hits in 755 CRISPR screens"/>
</dbReference>
<dbReference type="GeneWiki" id="OR51I1"/>
<dbReference type="GenomeRNAi" id="390063"/>
<dbReference type="Pharos" id="Q9H343">
    <property type="development level" value="Tdark"/>
</dbReference>
<dbReference type="PRO" id="PR:Q9H343"/>
<dbReference type="Proteomes" id="UP000005640">
    <property type="component" value="Chromosome 11"/>
</dbReference>
<dbReference type="RNAct" id="Q9H343">
    <property type="molecule type" value="protein"/>
</dbReference>
<dbReference type="Bgee" id="ENSG00000167359">
    <property type="expression patterns" value="Expressed in right uterine tube and 5 other cell types or tissues"/>
</dbReference>
<dbReference type="ExpressionAtlas" id="Q9H343">
    <property type="expression patterns" value="baseline and differential"/>
</dbReference>
<dbReference type="GO" id="GO:0016020">
    <property type="term" value="C:membrane"/>
    <property type="evidence" value="ECO:0000303"/>
    <property type="project" value="UniProtKB"/>
</dbReference>
<dbReference type="GO" id="GO:0005886">
    <property type="term" value="C:plasma membrane"/>
    <property type="evidence" value="ECO:0000318"/>
    <property type="project" value="GO_Central"/>
</dbReference>
<dbReference type="GO" id="GO:0004930">
    <property type="term" value="F:G protein-coupled receptor activity"/>
    <property type="evidence" value="ECO:0007669"/>
    <property type="project" value="UniProtKB-KW"/>
</dbReference>
<dbReference type="GO" id="GO:0004984">
    <property type="term" value="F:olfactory receptor activity"/>
    <property type="evidence" value="ECO:0000318"/>
    <property type="project" value="GO_Central"/>
</dbReference>
<dbReference type="GO" id="GO:0007608">
    <property type="term" value="P:sensory perception of smell"/>
    <property type="evidence" value="ECO:0000303"/>
    <property type="project" value="UniProtKB"/>
</dbReference>
<dbReference type="CDD" id="cd15222">
    <property type="entry name" value="7tmA_OR51-like"/>
    <property type="match status" value="1"/>
</dbReference>
<dbReference type="FunFam" id="1.20.1070.10:FF:000002">
    <property type="entry name" value="Olfactory receptor"/>
    <property type="match status" value="1"/>
</dbReference>
<dbReference type="Gene3D" id="1.20.1070.10">
    <property type="entry name" value="Rhodopsin 7-helix transmembrane proteins"/>
    <property type="match status" value="1"/>
</dbReference>
<dbReference type="InterPro" id="IPR000276">
    <property type="entry name" value="GPCR_Rhodpsn"/>
</dbReference>
<dbReference type="InterPro" id="IPR017452">
    <property type="entry name" value="GPCR_Rhodpsn_7TM"/>
</dbReference>
<dbReference type="InterPro" id="IPR000725">
    <property type="entry name" value="Olfact_rcpt"/>
</dbReference>
<dbReference type="InterPro" id="IPR050402">
    <property type="entry name" value="OR51/52/56-like"/>
</dbReference>
<dbReference type="PANTHER" id="PTHR26450:SF66">
    <property type="entry name" value="OLFACTORY RECEPTOR 51I1"/>
    <property type="match status" value="1"/>
</dbReference>
<dbReference type="PANTHER" id="PTHR26450">
    <property type="entry name" value="OLFACTORY RECEPTOR 56B1-RELATED"/>
    <property type="match status" value="1"/>
</dbReference>
<dbReference type="Pfam" id="PF13853">
    <property type="entry name" value="7tm_4"/>
    <property type="match status" value="1"/>
</dbReference>
<dbReference type="PRINTS" id="PR00237">
    <property type="entry name" value="GPCRRHODOPSN"/>
</dbReference>
<dbReference type="PRINTS" id="PR00245">
    <property type="entry name" value="OLFACTORYR"/>
</dbReference>
<dbReference type="SMART" id="SM01381">
    <property type="entry name" value="7TM_GPCR_Srsx"/>
    <property type="match status" value="1"/>
</dbReference>
<dbReference type="SUPFAM" id="SSF81321">
    <property type="entry name" value="Family A G protein-coupled receptor-like"/>
    <property type="match status" value="1"/>
</dbReference>
<dbReference type="PROSITE" id="PS00237">
    <property type="entry name" value="G_PROTEIN_RECEP_F1_1"/>
    <property type="match status" value="1"/>
</dbReference>
<dbReference type="PROSITE" id="PS50262">
    <property type="entry name" value="G_PROTEIN_RECEP_F1_2"/>
    <property type="match status" value="1"/>
</dbReference>
<feature type="chain" id="PRO_0000150757" description="Olfactory receptor 51I1">
    <location>
        <begin position="1"/>
        <end position="314"/>
    </location>
</feature>
<feature type="topological domain" description="Extracellular" evidence="1">
    <location>
        <begin position="1"/>
        <end position="27"/>
    </location>
</feature>
<feature type="transmembrane region" description="Helical; Name=1" evidence="1">
    <location>
        <begin position="28"/>
        <end position="48"/>
    </location>
</feature>
<feature type="topological domain" description="Cytoplasmic" evidence="1">
    <location>
        <begin position="49"/>
        <end position="56"/>
    </location>
</feature>
<feature type="transmembrane region" description="Helical; Name=2" evidence="1">
    <location>
        <begin position="57"/>
        <end position="77"/>
    </location>
</feature>
<feature type="topological domain" description="Extracellular" evidence="1">
    <location>
        <begin position="78"/>
        <end position="101"/>
    </location>
</feature>
<feature type="transmembrane region" description="Helical; Name=3" evidence="1">
    <location>
        <begin position="102"/>
        <end position="122"/>
    </location>
</feature>
<feature type="topological domain" description="Cytoplasmic" evidence="1">
    <location>
        <begin position="123"/>
        <end position="141"/>
    </location>
</feature>
<feature type="transmembrane region" description="Helical; Name=4" evidence="1">
    <location>
        <begin position="142"/>
        <end position="162"/>
    </location>
</feature>
<feature type="topological domain" description="Extracellular" evidence="1">
    <location>
        <begin position="163"/>
        <end position="198"/>
    </location>
</feature>
<feature type="transmembrane region" description="Helical; Name=5" evidence="1">
    <location>
        <begin position="199"/>
        <end position="219"/>
    </location>
</feature>
<feature type="topological domain" description="Cytoplasmic" evidence="1">
    <location>
        <begin position="220"/>
        <end position="239"/>
    </location>
</feature>
<feature type="transmembrane region" description="Helical; Name=6" evidence="1">
    <location>
        <begin position="240"/>
        <end position="260"/>
    </location>
</feature>
<feature type="topological domain" description="Extracellular" evidence="1">
    <location>
        <begin position="261"/>
        <end position="275"/>
    </location>
</feature>
<feature type="transmembrane region" description="Helical; Name=7" evidence="1">
    <location>
        <begin position="276"/>
        <end position="296"/>
    </location>
</feature>
<feature type="topological domain" description="Cytoplasmic" evidence="1">
    <location>
        <begin position="297"/>
        <end position="314"/>
    </location>
</feature>
<feature type="disulfide bond" evidence="2">
    <location>
        <begin position="99"/>
        <end position="191"/>
    </location>
</feature>
<feature type="sequence variant" id="VAR_053328" description="In dbSNP:rs16930982.">
    <original>R</original>
    <variation>H</variation>
    <location>
        <position position="124"/>
    </location>
</feature>
<feature type="sequence variant" id="VAR_034320" description="In dbSNP:rs11037445.">
    <original>V</original>
    <variation>L</variation>
    <location>
        <position position="164"/>
    </location>
</feature>
<feature type="sequence variant" id="VAR_024142" description="In dbSNP:rs1498486.">
    <original>A</original>
    <variation>S</variation>
    <location>
        <position position="252"/>
    </location>
</feature>
<proteinExistence type="evidence at transcript level"/>
<name>O51I1_HUMAN</name>
<comment type="function">
    <text evidence="3">Odorant receptor.</text>
</comment>
<comment type="subcellular location">
    <subcellularLocation>
        <location>Cell membrane</location>
        <topology>Multi-pass membrane protein</topology>
    </subcellularLocation>
</comment>
<comment type="similarity">
    <text evidence="2">Belongs to the G-protein coupled receptor 1 family.</text>
</comment>
<comment type="online information" name="Human Olfactory Receptor Data Exploratorium (HORDE)">
    <link uri="http://genome.weizmann.ac.il/horde/card/index/symbol:OR51I1"/>
</comment>
<gene>
    <name type="primary">OR51I1</name>
</gene>
<organism>
    <name type="scientific">Homo sapiens</name>
    <name type="common">Human</name>
    <dbReference type="NCBI Taxonomy" id="9606"/>
    <lineage>
        <taxon>Eukaryota</taxon>
        <taxon>Metazoa</taxon>
        <taxon>Chordata</taxon>
        <taxon>Craniata</taxon>
        <taxon>Vertebrata</taxon>
        <taxon>Euteleostomi</taxon>
        <taxon>Mammalia</taxon>
        <taxon>Eutheria</taxon>
        <taxon>Euarchontoglires</taxon>
        <taxon>Primates</taxon>
        <taxon>Haplorrhini</taxon>
        <taxon>Catarrhini</taxon>
        <taxon>Hominidae</taxon>
        <taxon>Homo</taxon>
    </lineage>
</organism>
<reference key="1">
    <citation type="journal article" date="2000" name="Proc. Natl. Acad. Sci. U.S.A.">
        <title>Comparative structural and functional analysis of the olfactory receptor genes flanking the human and mouse beta-globin gene clusters.</title>
        <authorList>
            <person name="Bulger M."/>
            <person name="Bender M.A."/>
            <person name="van Doorninck J.H."/>
            <person name="Wertman B."/>
            <person name="Farrell C.M."/>
            <person name="Felsenfeld G."/>
            <person name="Groudine M."/>
            <person name="Hardison R."/>
        </authorList>
    </citation>
    <scope>NUCLEOTIDE SEQUENCE [GENOMIC DNA]</scope>
</reference>
<reference key="2">
    <citation type="submission" date="2005-09" db="EMBL/GenBank/DDBJ databases">
        <authorList>
            <person name="Mural R.J."/>
            <person name="Istrail S."/>
            <person name="Sutton G.G."/>
            <person name="Florea L."/>
            <person name="Halpern A.L."/>
            <person name="Mobarry C.M."/>
            <person name="Lippert R."/>
            <person name="Walenz B."/>
            <person name="Shatkay H."/>
            <person name="Dew I."/>
            <person name="Miller J.R."/>
            <person name="Flanigan M.J."/>
            <person name="Edwards N.J."/>
            <person name="Bolanos R."/>
            <person name="Fasulo D."/>
            <person name="Halldorsson B.V."/>
            <person name="Hannenhalli S."/>
            <person name="Turner R."/>
            <person name="Yooseph S."/>
            <person name="Lu F."/>
            <person name="Nusskern D.R."/>
            <person name="Shue B.C."/>
            <person name="Zheng X.H."/>
            <person name="Zhong F."/>
            <person name="Delcher A.L."/>
            <person name="Huson D.H."/>
            <person name="Kravitz S.A."/>
            <person name="Mouchard L."/>
            <person name="Reinert K."/>
            <person name="Remington K.A."/>
            <person name="Clark A.G."/>
            <person name="Waterman M.S."/>
            <person name="Eichler E.E."/>
            <person name="Adams M.D."/>
            <person name="Hunkapiller M.W."/>
            <person name="Myers E.W."/>
            <person name="Venter J.C."/>
        </authorList>
    </citation>
    <scope>NUCLEOTIDE SEQUENCE [LARGE SCALE GENOMIC DNA]</scope>
</reference>
<reference key="3">
    <citation type="journal article" date="2004" name="Genome Res.">
        <title>The status, quality, and expansion of the NIH full-length cDNA project: the Mammalian Gene Collection (MGC).</title>
        <authorList>
            <consortium name="The MGC Project Team"/>
        </authorList>
    </citation>
    <scope>NUCLEOTIDE SEQUENCE [LARGE SCALE MRNA]</scope>
</reference>
<reference key="4">
    <citation type="journal article" date="2004" name="Proc. Natl. Acad. Sci. U.S.A.">
        <title>The human olfactory receptor gene family.</title>
        <authorList>
            <person name="Malnic B."/>
            <person name="Godfrey P.A."/>
            <person name="Buck L.B."/>
        </authorList>
    </citation>
    <scope>IDENTIFICATION</scope>
</reference>
<reference key="5">
    <citation type="journal article" date="2004" name="Proc. Natl. Acad. Sci. U.S.A.">
        <authorList>
            <person name="Malnic B."/>
            <person name="Godfrey P.A."/>
            <person name="Buck L.B."/>
        </authorList>
    </citation>
    <scope>ERRATUM OF PUBMED:14983052</scope>
</reference>
<evidence type="ECO:0000255" key="1"/>
<evidence type="ECO:0000255" key="2">
    <source>
        <dbReference type="PROSITE-ProRule" id="PRU00521"/>
    </source>
</evidence>
<evidence type="ECO:0000305" key="3"/>
<keyword id="KW-1003">Cell membrane</keyword>
<keyword id="KW-1015">Disulfide bond</keyword>
<keyword id="KW-0297">G-protein coupled receptor</keyword>
<keyword id="KW-0472">Membrane</keyword>
<keyword id="KW-0552">Olfaction</keyword>
<keyword id="KW-0675">Receptor</keyword>
<keyword id="KW-1185">Reference proteome</keyword>
<keyword id="KW-0716">Sensory transduction</keyword>
<keyword id="KW-0807">Transducer</keyword>
<keyword id="KW-0812">Transmembrane</keyword>
<keyword id="KW-1133">Transmembrane helix</keyword>
<sequence>MLGLNGTPFQPATLQLTGIPGIQTGLTWVALIFCILYMISIVGNLSILTLVFWEPALHQPMYYFLSMLALNDLGVSFSTLPTVISTFCFNYNHVAFNACLVQMFFIHTFSFMESGILLAMSLDRFVAICYPLRYVTVLTHNRILAMGLGILTKSFTTLFPFPFVVKRLPFCKGNVLHHSYCLHPDLMKVACGDIHVNNIYGLLVIIFTYGMDSTFILLSYALILRAMLVIISQEQRLKALNTCMSHICAVLAFYVPIIAVSMIHRFWKSAPPVVHVMMSNVYLFVPPMLNPIIYSVKTKEIRKGILKFFHKSQA</sequence>
<accession>Q9H343</accession>
<accession>B9EKW2</accession>
<accession>Q6IF33</accession>